<accession>Q9CEU0</accession>
<name>AROA_LACLA</name>
<dbReference type="EC" id="2.5.1.19" evidence="1"/>
<dbReference type="EMBL" id="AE005176">
    <property type="protein sequence ID" value="AAK05842.1"/>
    <property type="molecule type" value="Genomic_DNA"/>
</dbReference>
<dbReference type="PIR" id="H86842">
    <property type="entry name" value="H86842"/>
</dbReference>
<dbReference type="RefSeq" id="NP_267900.1">
    <property type="nucleotide sequence ID" value="NC_002662.1"/>
</dbReference>
<dbReference type="RefSeq" id="WP_003132786.1">
    <property type="nucleotide sequence ID" value="NC_002662.1"/>
</dbReference>
<dbReference type="SMR" id="Q9CEU0"/>
<dbReference type="PaxDb" id="272623-L0057"/>
<dbReference type="EnsemblBacteria" id="AAK05842">
    <property type="protein sequence ID" value="AAK05842"/>
    <property type="gene ID" value="L0057"/>
</dbReference>
<dbReference type="KEGG" id="lla:L0057"/>
<dbReference type="PATRIC" id="fig|272623.7.peg.1870"/>
<dbReference type="eggNOG" id="COG0128">
    <property type="taxonomic scope" value="Bacteria"/>
</dbReference>
<dbReference type="HOGENOM" id="CLU_024321_0_1_9"/>
<dbReference type="OrthoDB" id="9809920at2"/>
<dbReference type="UniPathway" id="UPA00053">
    <property type="reaction ID" value="UER00089"/>
</dbReference>
<dbReference type="Proteomes" id="UP000002196">
    <property type="component" value="Chromosome"/>
</dbReference>
<dbReference type="GO" id="GO:0005737">
    <property type="term" value="C:cytoplasm"/>
    <property type="evidence" value="ECO:0007669"/>
    <property type="project" value="UniProtKB-SubCell"/>
</dbReference>
<dbReference type="GO" id="GO:0003866">
    <property type="term" value="F:3-phosphoshikimate 1-carboxyvinyltransferase activity"/>
    <property type="evidence" value="ECO:0007669"/>
    <property type="project" value="UniProtKB-UniRule"/>
</dbReference>
<dbReference type="GO" id="GO:0008652">
    <property type="term" value="P:amino acid biosynthetic process"/>
    <property type="evidence" value="ECO:0007669"/>
    <property type="project" value="UniProtKB-KW"/>
</dbReference>
<dbReference type="GO" id="GO:0009073">
    <property type="term" value="P:aromatic amino acid family biosynthetic process"/>
    <property type="evidence" value="ECO:0007669"/>
    <property type="project" value="UniProtKB-KW"/>
</dbReference>
<dbReference type="GO" id="GO:0009423">
    <property type="term" value="P:chorismate biosynthetic process"/>
    <property type="evidence" value="ECO:0007669"/>
    <property type="project" value="UniProtKB-UniRule"/>
</dbReference>
<dbReference type="CDD" id="cd01556">
    <property type="entry name" value="EPSP_synthase"/>
    <property type="match status" value="1"/>
</dbReference>
<dbReference type="FunFam" id="3.65.10.10:FF:000005">
    <property type="entry name" value="3-phosphoshikimate 1-carboxyvinyltransferase"/>
    <property type="match status" value="1"/>
</dbReference>
<dbReference type="FunFam" id="3.65.10.10:FF:000006">
    <property type="entry name" value="3-phosphoshikimate 1-carboxyvinyltransferase"/>
    <property type="match status" value="1"/>
</dbReference>
<dbReference type="Gene3D" id="3.65.10.10">
    <property type="entry name" value="Enolpyruvate transferase domain"/>
    <property type="match status" value="2"/>
</dbReference>
<dbReference type="HAMAP" id="MF_00210">
    <property type="entry name" value="EPSP_synth"/>
    <property type="match status" value="1"/>
</dbReference>
<dbReference type="InterPro" id="IPR001986">
    <property type="entry name" value="Enolpyruvate_Tfrase_dom"/>
</dbReference>
<dbReference type="InterPro" id="IPR036968">
    <property type="entry name" value="Enolpyruvate_Tfrase_sf"/>
</dbReference>
<dbReference type="InterPro" id="IPR006264">
    <property type="entry name" value="EPSP_synthase"/>
</dbReference>
<dbReference type="InterPro" id="IPR023193">
    <property type="entry name" value="EPSP_synthase_CS"/>
</dbReference>
<dbReference type="InterPro" id="IPR013792">
    <property type="entry name" value="RNA3'P_cycl/enolpyr_Trfase_a/b"/>
</dbReference>
<dbReference type="NCBIfam" id="TIGR01356">
    <property type="entry name" value="aroA"/>
    <property type="match status" value="1"/>
</dbReference>
<dbReference type="PANTHER" id="PTHR21090">
    <property type="entry name" value="AROM/DEHYDROQUINATE SYNTHASE"/>
    <property type="match status" value="1"/>
</dbReference>
<dbReference type="PANTHER" id="PTHR21090:SF5">
    <property type="entry name" value="PENTAFUNCTIONAL AROM POLYPEPTIDE"/>
    <property type="match status" value="1"/>
</dbReference>
<dbReference type="Pfam" id="PF00275">
    <property type="entry name" value="EPSP_synthase"/>
    <property type="match status" value="1"/>
</dbReference>
<dbReference type="PIRSF" id="PIRSF000505">
    <property type="entry name" value="EPSPS"/>
    <property type="match status" value="1"/>
</dbReference>
<dbReference type="SUPFAM" id="SSF55205">
    <property type="entry name" value="EPT/RTPC-like"/>
    <property type="match status" value="1"/>
</dbReference>
<dbReference type="PROSITE" id="PS00104">
    <property type="entry name" value="EPSP_SYNTHASE_1"/>
    <property type="match status" value="1"/>
</dbReference>
<dbReference type="PROSITE" id="PS00885">
    <property type="entry name" value="EPSP_SYNTHASE_2"/>
    <property type="match status" value="1"/>
</dbReference>
<sequence>MKLKINSQGLKGRLKVPGDKSISHRSIMFGSIAKGKTVIYDILRGEDVLSTIEAFRAMGVEIEDKGEVITVHGKGISELKAPEKALDMGNSGTSTRLLSGILAGLPFETTLFGDDSLSKRPMDRVATPLQLMGAEITGQTDKVKLPMTIKGSTHLKAIDYVLPVASAQVKSAVIFAALQAEGLTKVVEKEKTRSHTEEMLVQFGGELKVSDKTILVPGGQKLVGQKVVVPGDISSAAFWLVAALVVENSELILENVGVNETRTGIIEVIQAMGGQLEILEQDNVAKAATLKVKASQLKGTEISGDLIPRLIDELPIIALLATQAQGQTIIRDAAELKVKETDRIAVVANALNSMGAKIQPTDDGMIIQGGTKLHAPENSINTLGDHRIGMMAAIAALLVKNGEIELERAEAIQTSYPSFFDDLEQLSENI</sequence>
<reference key="1">
    <citation type="journal article" date="2001" name="Genome Res.">
        <title>The complete genome sequence of the lactic acid bacterium Lactococcus lactis ssp. lactis IL1403.</title>
        <authorList>
            <person name="Bolotin A."/>
            <person name="Wincker P."/>
            <person name="Mauger S."/>
            <person name="Jaillon O."/>
            <person name="Malarme K."/>
            <person name="Weissenbach J."/>
            <person name="Ehrlich S.D."/>
            <person name="Sorokin A."/>
        </authorList>
    </citation>
    <scope>NUCLEOTIDE SEQUENCE [LARGE SCALE GENOMIC DNA]</scope>
    <source>
        <strain>IL1403</strain>
    </source>
</reference>
<organism>
    <name type="scientific">Lactococcus lactis subsp. lactis (strain IL1403)</name>
    <name type="common">Streptococcus lactis</name>
    <dbReference type="NCBI Taxonomy" id="272623"/>
    <lineage>
        <taxon>Bacteria</taxon>
        <taxon>Bacillati</taxon>
        <taxon>Bacillota</taxon>
        <taxon>Bacilli</taxon>
        <taxon>Lactobacillales</taxon>
        <taxon>Streptococcaceae</taxon>
        <taxon>Lactococcus</taxon>
    </lineage>
</organism>
<protein>
    <recommendedName>
        <fullName evidence="1">3-phosphoshikimate 1-carboxyvinyltransferase</fullName>
        <ecNumber evidence="1">2.5.1.19</ecNumber>
    </recommendedName>
    <alternativeName>
        <fullName evidence="1">5-enolpyruvylshikimate-3-phosphate synthase</fullName>
        <shortName evidence="1">EPSP synthase</shortName>
        <shortName evidence="1">EPSPS</shortName>
    </alternativeName>
</protein>
<keyword id="KW-0028">Amino-acid biosynthesis</keyword>
<keyword id="KW-0057">Aromatic amino acid biosynthesis</keyword>
<keyword id="KW-0963">Cytoplasm</keyword>
<keyword id="KW-1185">Reference proteome</keyword>
<keyword id="KW-0808">Transferase</keyword>
<comment type="function">
    <text evidence="1">Catalyzes the transfer of the enolpyruvyl moiety of phosphoenolpyruvate (PEP) to the 5-hydroxyl of shikimate-3-phosphate (S3P) to produce enolpyruvyl shikimate-3-phosphate and inorganic phosphate.</text>
</comment>
<comment type="catalytic activity">
    <reaction evidence="1">
        <text>3-phosphoshikimate + phosphoenolpyruvate = 5-O-(1-carboxyvinyl)-3-phosphoshikimate + phosphate</text>
        <dbReference type="Rhea" id="RHEA:21256"/>
        <dbReference type="ChEBI" id="CHEBI:43474"/>
        <dbReference type="ChEBI" id="CHEBI:57701"/>
        <dbReference type="ChEBI" id="CHEBI:58702"/>
        <dbReference type="ChEBI" id="CHEBI:145989"/>
        <dbReference type="EC" id="2.5.1.19"/>
    </reaction>
    <physiologicalReaction direction="left-to-right" evidence="1">
        <dbReference type="Rhea" id="RHEA:21257"/>
    </physiologicalReaction>
</comment>
<comment type="pathway">
    <text evidence="1">Metabolic intermediate biosynthesis; chorismate biosynthesis; chorismate from D-erythrose 4-phosphate and phosphoenolpyruvate: step 6/7.</text>
</comment>
<comment type="subunit">
    <text evidence="1">Monomer.</text>
</comment>
<comment type="subcellular location">
    <subcellularLocation>
        <location evidence="1">Cytoplasm</location>
    </subcellularLocation>
</comment>
<comment type="similarity">
    <text evidence="1 2">Belongs to the EPSP synthase family.</text>
</comment>
<feature type="chain" id="PRO_0000088263" description="3-phosphoshikimate 1-carboxyvinyltransferase">
    <location>
        <begin position="1"/>
        <end position="430"/>
    </location>
</feature>
<feature type="active site" description="Proton acceptor" evidence="1">
    <location>
        <position position="312"/>
    </location>
</feature>
<feature type="binding site" evidence="1">
    <location>
        <position position="20"/>
    </location>
    <ligand>
        <name>3-phosphoshikimate</name>
        <dbReference type="ChEBI" id="CHEBI:145989"/>
    </ligand>
</feature>
<feature type="binding site" evidence="1">
    <location>
        <position position="20"/>
    </location>
    <ligand>
        <name>phosphoenolpyruvate</name>
        <dbReference type="ChEBI" id="CHEBI:58702"/>
    </ligand>
</feature>
<feature type="binding site" evidence="1">
    <location>
        <position position="21"/>
    </location>
    <ligand>
        <name>3-phosphoshikimate</name>
        <dbReference type="ChEBI" id="CHEBI:145989"/>
    </ligand>
</feature>
<feature type="binding site" evidence="1">
    <location>
        <position position="25"/>
    </location>
    <ligand>
        <name>3-phosphoshikimate</name>
        <dbReference type="ChEBI" id="CHEBI:145989"/>
    </ligand>
</feature>
<feature type="binding site" evidence="1">
    <location>
        <position position="92"/>
    </location>
    <ligand>
        <name>phosphoenolpyruvate</name>
        <dbReference type="ChEBI" id="CHEBI:58702"/>
    </ligand>
</feature>
<feature type="binding site" evidence="1">
    <location>
        <position position="120"/>
    </location>
    <ligand>
        <name>phosphoenolpyruvate</name>
        <dbReference type="ChEBI" id="CHEBI:58702"/>
    </ligand>
</feature>
<feature type="binding site" evidence="1">
    <location>
        <position position="166"/>
    </location>
    <ligand>
        <name>3-phosphoshikimate</name>
        <dbReference type="ChEBI" id="CHEBI:145989"/>
    </ligand>
</feature>
<feature type="binding site" evidence="1">
    <location>
        <position position="168"/>
    </location>
    <ligand>
        <name>3-phosphoshikimate</name>
        <dbReference type="ChEBI" id="CHEBI:145989"/>
    </ligand>
</feature>
<feature type="binding site" evidence="1">
    <location>
        <position position="168"/>
    </location>
    <ligand>
        <name>phosphoenolpyruvate</name>
        <dbReference type="ChEBI" id="CHEBI:58702"/>
    </ligand>
</feature>
<feature type="binding site" evidence="1">
    <location>
        <position position="312"/>
    </location>
    <ligand>
        <name>3-phosphoshikimate</name>
        <dbReference type="ChEBI" id="CHEBI:145989"/>
    </ligand>
</feature>
<feature type="binding site" evidence="1">
    <location>
        <position position="339"/>
    </location>
    <ligand>
        <name>3-phosphoshikimate</name>
        <dbReference type="ChEBI" id="CHEBI:145989"/>
    </ligand>
</feature>
<feature type="binding site" evidence="1">
    <location>
        <position position="343"/>
    </location>
    <ligand>
        <name>phosphoenolpyruvate</name>
        <dbReference type="ChEBI" id="CHEBI:58702"/>
    </ligand>
</feature>
<feature type="binding site" evidence="1">
    <location>
        <position position="387"/>
    </location>
    <ligand>
        <name>phosphoenolpyruvate</name>
        <dbReference type="ChEBI" id="CHEBI:58702"/>
    </ligand>
</feature>
<gene>
    <name evidence="1" type="primary">aroA</name>
    <name type="ordered locus">LL1744</name>
    <name type="ORF">L0057</name>
</gene>
<evidence type="ECO:0000255" key="1">
    <source>
        <dbReference type="HAMAP-Rule" id="MF_00210"/>
    </source>
</evidence>
<evidence type="ECO:0000305" key="2"/>
<proteinExistence type="inferred from homology"/>